<proteinExistence type="inferred from homology"/>
<name>MTNA_PELTS</name>
<gene>
    <name evidence="1" type="primary">mtnA</name>
    <name type="ordered locus">PTH_1730</name>
</gene>
<accession>A5D1G8</accession>
<evidence type="ECO:0000255" key="1">
    <source>
        <dbReference type="HAMAP-Rule" id="MF_01678"/>
    </source>
</evidence>
<evidence type="ECO:0000305" key="2"/>
<feature type="chain" id="PRO_0000357217" description="Methylthioribose-1-phosphate isomerase">
    <location>
        <begin position="1"/>
        <end position="364"/>
    </location>
</feature>
<feature type="active site" description="Proton donor" evidence="1">
    <location>
        <position position="237"/>
    </location>
</feature>
<feature type="binding site" evidence="1">
    <location>
        <begin position="46"/>
        <end position="48"/>
    </location>
    <ligand>
        <name>substrate</name>
    </ligand>
</feature>
<feature type="binding site" evidence="1">
    <location>
        <position position="89"/>
    </location>
    <ligand>
        <name>substrate</name>
    </ligand>
</feature>
<feature type="binding site" evidence="1">
    <location>
        <position position="196"/>
    </location>
    <ligand>
        <name>substrate</name>
    </ligand>
</feature>
<feature type="binding site" evidence="1">
    <location>
        <begin position="247"/>
        <end position="248"/>
    </location>
    <ligand>
        <name>substrate</name>
    </ligand>
</feature>
<feature type="site" description="Transition state stabilizer" evidence="1">
    <location>
        <position position="157"/>
    </location>
</feature>
<organism>
    <name type="scientific">Pelotomaculum thermopropionicum (strain DSM 13744 / JCM 10971 / SI)</name>
    <dbReference type="NCBI Taxonomy" id="370438"/>
    <lineage>
        <taxon>Bacteria</taxon>
        <taxon>Bacillati</taxon>
        <taxon>Bacillota</taxon>
        <taxon>Clostridia</taxon>
        <taxon>Eubacteriales</taxon>
        <taxon>Desulfotomaculaceae</taxon>
        <taxon>Pelotomaculum</taxon>
    </lineage>
</organism>
<keyword id="KW-0028">Amino-acid biosynthesis</keyword>
<keyword id="KW-0413">Isomerase</keyword>
<keyword id="KW-0486">Methionine biosynthesis</keyword>
<keyword id="KW-1185">Reference proteome</keyword>
<sequence length="364" mass="39529">MLDTMRWTGDGLLELLDQTRLPFEKSYIKCTEYTDVAEAIKRLAVRGAPAIGAAAAYGLVLAARKIRANTKKEFLTELEARARELAATRPTAVNLHWALNRMLRKMRLAEPEDAGLLCDLLLEEAQAIFREDITGNRRMARYGLELIPEGARILTHCNAGALATAGYGTALGLVRAAHEAGRRVSVYAGETRPLLQGARLTAWEMLQEGIPVTLITDSMAGYLLAKGKADLVVVGADRIAANGDVANKIGTYSLAVLAREHKIPFYVAAPVSTIDLSLASGEEIPIEERDSSEVTHLAGRPVAPEGVNVWNPAFDVTPARLITAIITDRGIVKPPYDENLRKTVEGLNRNLVIELTAEDGKSNL</sequence>
<protein>
    <recommendedName>
        <fullName evidence="1">Methylthioribose-1-phosphate isomerase</fullName>
        <shortName evidence="1">M1Pi</shortName>
        <shortName evidence="1">MTR-1-P isomerase</shortName>
        <ecNumber evidence="1">5.3.1.23</ecNumber>
    </recommendedName>
    <alternativeName>
        <fullName evidence="1">S-methyl-5-thioribose-1-phosphate isomerase</fullName>
    </alternativeName>
</protein>
<reference key="1">
    <citation type="journal article" date="2008" name="Genome Res.">
        <title>The genome of Pelotomaculum thermopropionicum reveals niche-associated evolution in anaerobic microbiota.</title>
        <authorList>
            <person name="Kosaka T."/>
            <person name="Kato S."/>
            <person name="Shimoyama T."/>
            <person name="Ishii S."/>
            <person name="Abe T."/>
            <person name="Watanabe K."/>
        </authorList>
    </citation>
    <scope>NUCLEOTIDE SEQUENCE [LARGE SCALE GENOMIC DNA]</scope>
    <source>
        <strain>DSM 13744 / JCM 10971 / SI</strain>
    </source>
</reference>
<dbReference type="EC" id="5.3.1.23" evidence="1"/>
<dbReference type="EMBL" id="AP009389">
    <property type="protein sequence ID" value="BAF59911.1"/>
    <property type="molecule type" value="Genomic_DNA"/>
</dbReference>
<dbReference type="SMR" id="A5D1G8"/>
<dbReference type="STRING" id="370438.PTH_1730"/>
<dbReference type="KEGG" id="pth:PTH_1730"/>
<dbReference type="eggNOG" id="COG0182">
    <property type="taxonomic scope" value="Bacteria"/>
</dbReference>
<dbReference type="HOGENOM" id="CLU_016218_1_2_9"/>
<dbReference type="UniPathway" id="UPA00904">
    <property type="reaction ID" value="UER00874"/>
</dbReference>
<dbReference type="Proteomes" id="UP000006556">
    <property type="component" value="Chromosome"/>
</dbReference>
<dbReference type="GO" id="GO:0046523">
    <property type="term" value="F:S-methyl-5-thioribose-1-phosphate isomerase activity"/>
    <property type="evidence" value="ECO:0007669"/>
    <property type="project" value="UniProtKB-UniRule"/>
</dbReference>
<dbReference type="GO" id="GO:0019509">
    <property type="term" value="P:L-methionine salvage from methylthioadenosine"/>
    <property type="evidence" value="ECO:0007669"/>
    <property type="project" value="UniProtKB-UniRule"/>
</dbReference>
<dbReference type="FunFam" id="1.20.120.420:FF:000003">
    <property type="entry name" value="Methylthioribose-1-phosphate isomerase"/>
    <property type="match status" value="1"/>
</dbReference>
<dbReference type="FunFam" id="3.40.50.10470:FF:000010">
    <property type="entry name" value="Methylthioribose-1-phosphate isomerase"/>
    <property type="match status" value="1"/>
</dbReference>
<dbReference type="Gene3D" id="1.20.120.420">
    <property type="entry name" value="translation initiation factor eif-2b, domain 1"/>
    <property type="match status" value="1"/>
</dbReference>
<dbReference type="Gene3D" id="3.40.50.10470">
    <property type="entry name" value="Translation initiation factor eif-2b, domain 2"/>
    <property type="match status" value="1"/>
</dbReference>
<dbReference type="HAMAP" id="MF_01678">
    <property type="entry name" value="Salvage_MtnA"/>
    <property type="match status" value="1"/>
</dbReference>
<dbReference type="InterPro" id="IPR000649">
    <property type="entry name" value="IF-2B-related"/>
</dbReference>
<dbReference type="InterPro" id="IPR005251">
    <property type="entry name" value="IF-M1Pi"/>
</dbReference>
<dbReference type="InterPro" id="IPR042529">
    <property type="entry name" value="IF_2B-like_C"/>
</dbReference>
<dbReference type="InterPro" id="IPR011559">
    <property type="entry name" value="Initiation_fac_2B_a/b/d"/>
</dbReference>
<dbReference type="InterPro" id="IPR027363">
    <property type="entry name" value="M1Pi_N"/>
</dbReference>
<dbReference type="InterPro" id="IPR037171">
    <property type="entry name" value="NagB/RpiA_transferase-like"/>
</dbReference>
<dbReference type="NCBIfam" id="TIGR00524">
    <property type="entry name" value="eIF-2B_rel"/>
    <property type="match status" value="1"/>
</dbReference>
<dbReference type="NCBIfam" id="NF004326">
    <property type="entry name" value="PRK05720.1"/>
    <property type="match status" value="1"/>
</dbReference>
<dbReference type="NCBIfam" id="TIGR00512">
    <property type="entry name" value="salvage_mtnA"/>
    <property type="match status" value="1"/>
</dbReference>
<dbReference type="PANTHER" id="PTHR43475">
    <property type="entry name" value="METHYLTHIORIBOSE-1-PHOSPHATE ISOMERASE"/>
    <property type="match status" value="1"/>
</dbReference>
<dbReference type="PANTHER" id="PTHR43475:SF1">
    <property type="entry name" value="METHYLTHIORIBOSE-1-PHOSPHATE ISOMERASE"/>
    <property type="match status" value="1"/>
</dbReference>
<dbReference type="Pfam" id="PF01008">
    <property type="entry name" value="IF-2B"/>
    <property type="match status" value="1"/>
</dbReference>
<dbReference type="SUPFAM" id="SSF100950">
    <property type="entry name" value="NagB/RpiA/CoA transferase-like"/>
    <property type="match status" value="1"/>
</dbReference>
<comment type="function">
    <text evidence="1">Catalyzes the interconversion of methylthioribose-1-phosphate (MTR-1-P) into methylthioribulose-1-phosphate (MTRu-1-P).</text>
</comment>
<comment type="catalytic activity">
    <reaction evidence="1">
        <text>5-(methylsulfanyl)-alpha-D-ribose 1-phosphate = 5-(methylsulfanyl)-D-ribulose 1-phosphate</text>
        <dbReference type="Rhea" id="RHEA:19989"/>
        <dbReference type="ChEBI" id="CHEBI:58533"/>
        <dbReference type="ChEBI" id="CHEBI:58548"/>
        <dbReference type="EC" id="5.3.1.23"/>
    </reaction>
</comment>
<comment type="pathway">
    <text evidence="1">Amino-acid biosynthesis; L-methionine biosynthesis via salvage pathway; L-methionine from S-methyl-5-thio-alpha-D-ribose 1-phosphate: step 1/6.</text>
</comment>
<comment type="similarity">
    <text evidence="2">Belongs to the eIF-2B alpha/beta/delta subunits family. MtnA subfamily.</text>
</comment>